<proteinExistence type="inferred from homology"/>
<keyword id="KW-0169">Cobalamin biosynthesis</keyword>
<keyword id="KW-0315">Glutamine amidotransferase</keyword>
<keyword id="KW-1185">Reference proteome</keyword>
<name>COBQ_METAR</name>
<comment type="function">
    <text evidence="1">Catalyzes amidations at positions B, D, E, and G on adenosylcobyrinic A,C-diamide. NH(2) groups are provided by glutamine, and one molecule of ATP is hydrogenolyzed for each amidation.</text>
</comment>
<comment type="pathway">
    <text evidence="1">Cofactor biosynthesis; adenosylcobalamin biosynthesis.</text>
</comment>
<comment type="similarity">
    <text evidence="1">Belongs to the CobB/CobQ family. CobQ subfamily.</text>
</comment>
<accession>Q0W1N4</accession>
<gene>
    <name evidence="1" type="primary">cobQ</name>
    <name type="ordered locus">UNCMA_05470</name>
    <name type="ORF">RCIX2662</name>
</gene>
<organism>
    <name type="scientific">Methanocella arvoryzae (strain DSM 22066 / NBRC 105507 / MRE50)</name>
    <dbReference type="NCBI Taxonomy" id="351160"/>
    <lineage>
        <taxon>Archaea</taxon>
        <taxon>Methanobacteriati</taxon>
        <taxon>Methanobacteriota</taxon>
        <taxon>Stenosarchaea group</taxon>
        <taxon>Methanomicrobia</taxon>
        <taxon>Methanocellales</taxon>
        <taxon>Methanocellaceae</taxon>
        <taxon>Methanocella</taxon>
    </lineage>
</organism>
<feature type="chain" id="PRO_1000002380" description="Probable cobyric acid synthase">
    <location>
        <begin position="1"/>
        <end position="487"/>
    </location>
</feature>
<feature type="domain" description="GATase cobBQ-type" evidence="1">
    <location>
        <begin position="249"/>
        <end position="435"/>
    </location>
</feature>
<feature type="active site" description="Nucleophile" evidence="1">
    <location>
        <position position="328"/>
    </location>
</feature>
<feature type="active site" evidence="1">
    <location>
        <position position="427"/>
    </location>
</feature>
<evidence type="ECO:0000255" key="1">
    <source>
        <dbReference type="HAMAP-Rule" id="MF_00028"/>
    </source>
</evidence>
<protein>
    <recommendedName>
        <fullName evidence="1">Probable cobyric acid synthase</fullName>
    </recommendedName>
</protein>
<reference key="1">
    <citation type="journal article" date="2006" name="Science">
        <title>Genome of rice cluster I archaea -- the key methane producers in the rice rhizosphere.</title>
        <authorList>
            <person name="Erkel C."/>
            <person name="Kube M."/>
            <person name="Reinhardt R."/>
            <person name="Liesack W."/>
        </authorList>
    </citation>
    <scope>NUCLEOTIDE SEQUENCE [LARGE SCALE GENOMIC DNA]</scope>
    <source>
        <strain>DSM 22066 / NBRC 105507 / MRE50</strain>
    </source>
</reference>
<sequence>MARYLTVLGTQSHVGKSILVTALCRILKRRGYRVAPFKAQNMSNNSWITADGSEIGIAQAIQAFAAGAEPRAEMNPVLLKPKGNMTSQVVVLGKPLGDRVVGQYYESIESMMAIALNALYKLSEDYDVIVVEGAGGAAEINLYDRDIANIPLARAIHSPVLLVGDIERGGVFASLYGTIALLPPGDRELVKGLIINKFCGDPSLLGSGVGELEKLTGVPVMGIVPYSGLRIPSEDSVSLGDKKPEGLLDVDIAVVRFPLISNFTDFEALERIARVRYVSLDDSLGRPDIVILPGSKNTVSDLKMLKNSPLASEICSLASDGVPVIGICGGYQMLGRQVVDSGIEGGMPETIDGLGLLPVTTVFDRYEKCTCQSTKTVTGAGPLLAGIRGSAVTGYEIHMGQTRTDSPAFGDDGCVSDSGTILGTYLHGIFNNASFTDAVLKYACERKGLRYVRPEGVRDPYDELADIVESAIDLDAIIRLIESQDKV</sequence>
<dbReference type="EMBL" id="AM114193">
    <property type="protein sequence ID" value="CAJ37709.1"/>
    <property type="molecule type" value="Genomic_DNA"/>
</dbReference>
<dbReference type="RefSeq" id="WP_012034876.1">
    <property type="nucleotide sequence ID" value="NC_009464.1"/>
</dbReference>
<dbReference type="SMR" id="Q0W1N4"/>
<dbReference type="STRING" id="351160.RCIX2662"/>
<dbReference type="GeneID" id="5145445"/>
<dbReference type="KEGG" id="rci:RCIX2662"/>
<dbReference type="PATRIC" id="fig|351160.9.peg.572"/>
<dbReference type="eggNOG" id="arCOG00105">
    <property type="taxonomic scope" value="Archaea"/>
</dbReference>
<dbReference type="OrthoDB" id="53136at2157"/>
<dbReference type="UniPathway" id="UPA00148"/>
<dbReference type="Proteomes" id="UP000000663">
    <property type="component" value="Chromosome"/>
</dbReference>
<dbReference type="GO" id="GO:0015420">
    <property type="term" value="F:ABC-type vitamin B12 transporter activity"/>
    <property type="evidence" value="ECO:0007669"/>
    <property type="project" value="UniProtKB-UniRule"/>
</dbReference>
<dbReference type="GO" id="GO:0003824">
    <property type="term" value="F:catalytic activity"/>
    <property type="evidence" value="ECO:0007669"/>
    <property type="project" value="InterPro"/>
</dbReference>
<dbReference type="GO" id="GO:0009236">
    <property type="term" value="P:cobalamin biosynthetic process"/>
    <property type="evidence" value="ECO:0007669"/>
    <property type="project" value="UniProtKB-UniRule"/>
</dbReference>
<dbReference type="CDD" id="cd05389">
    <property type="entry name" value="CobQ_N"/>
    <property type="match status" value="1"/>
</dbReference>
<dbReference type="CDD" id="cd01750">
    <property type="entry name" value="GATase1_CobQ"/>
    <property type="match status" value="1"/>
</dbReference>
<dbReference type="Gene3D" id="3.40.50.880">
    <property type="match status" value="1"/>
</dbReference>
<dbReference type="Gene3D" id="3.40.50.300">
    <property type="entry name" value="P-loop containing nucleotide triphosphate hydrolases"/>
    <property type="match status" value="1"/>
</dbReference>
<dbReference type="HAMAP" id="MF_00028">
    <property type="entry name" value="CobQ"/>
    <property type="match status" value="1"/>
</dbReference>
<dbReference type="InterPro" id="IPR029062">
    <property type="entry name" value="Class_I_gatase-like"/>
</dbReference>
<dbReference type="InterPro" id="IPR002586">
    <property type="entry name" value="CobQ/CobB/MinD/ParA_Nub-bd_dom"/>
</dbReference>
<dbReference type="InterPro" id="IPR033949">
    <property type="entry name" value="CobQ_GATase1"/>
</dbReference>
<dbReference type="InterPro" id="IPR047045">
    <property type="entry name" value="CobQ_N"/>
</dbReference>
<dbReference type="InterPro" id="IPR004459">
    <property type="entry name" value="CobQ_synth"/>
</dbReference>
<dbReference type="InterPro" id="IPR011698">
    <property type="entry name" value="GATase_3"/>
</dbReference>
<dbReference type="InterPro" id="IPR027417">
    <property type="entry name" value="P-loop_NTPase"/>
</dbReference>
<dbReference type="NCBIfam" id="TIGR00313">
    <property type="entry name" value="cobQ"/>
    <property type="match status" value="1"/>
</dbReference>
<dbReference type="NCBIfam" id="NF001989">
    <property type="entry name" value="PRK00784.1"/>
    <property type="match status" value="1"/>
</dbReference>
<dbReference type="PANTHER" id="PTHR21343:SF1">
    <property type="entry name" value="COBYRIC ACID SYNTHASE"/>
    <property type="match status" value="1"/>
</dbReference>
<dbReference type="PANTHER" id="PTHR21343">
    <property type="entry name" value="DETHIOBIOTIN SYNTHETASE"/>
    <property type="match status" value="1"/>
</dbReference>
<dbReference type="Pfam" id="PF01656">
    <property type="entry name" value="CbiA"/>
    <property type="match status" value="1"/>
</dbReference>
<dbReference type="Pfam" id="PF07685">
    <property type="entry name" value="GATase_3"/>
    <property type="match status" value="1"/>
</dbReference>
<dbReference type="SUPFAM" id="SSF52317">
    <property type="entry name" value="Class I glutamine amidotransferase-like"/>
    <property type="match status" value="1"/>
</dbReference>
<dbReference type="SUPFAM" id="SSF52540">
    <property type="entry name" value="P-loop containing nucleoside triphosphate hydrolases"/>
    <property type="match status" value="1"/>
</dbReference>
<dbReference type="PROSITE" id="PS51274">
    <property type="entry name" value="GATASE_COBBQ"/>
    <property type="match status" value="1"/>
</dbReference>